<protein>
    <recommendedName>
        <fullName>Engulfment and cell motility protein 3</fullName>
    </recommendedName>
</protein>
<name>ELMO3_RAT</name>
<accession>Q499U2</accession>
<proteinExistence type="evidence at transcript level"/>
<feature type="chain" id="PRO_0000375223" description="Engulfment and cell motility protein 3">
    <location>
        <begin position="1"/>
        <end position="720"/>
    </location>
</feature>
<feature type="domain" description="ELMO" evidence="3">
    <location>
        <begin position="307"/>
        <end position="479"/>
    </location>
</feature>
<feature type="domain" description="PH">
    <location>
        <begin position="541"/>
        <end position="663"/>
    </location>
</feature>
<comment type="function">
    <text evidence="1">Involved in cytoskeletal rearrangements required for phagocytosis of apoptotic cells and cell motility. Acts in association with DOCK1 and CRK. Was initially proposed to be required in complex with DOCK1 to activate Rac Rho small GTPases. May enhance the guanine nucleotide exchange factor (GEF) activity of DOCK1 (By similarity).</text>
</comment>
<comment type="subunit">
    <text evidence="1 2">Probably interacts directly with the SH3-domain of DOCK1 via its SH3-binding site. Part of a complex with DOCK1 and RAC1 (By similarity). Interacts with ADGRB3 (By similarity).</text>
</comment>
<comment type="subcellular location">
    <subcellularLocation>
        <location evidence="1">Cytoplasm</location>
    </subcellularLocation>
</comment>
<dbReference type="EMBL" id="CH473972">
    <property type="protein sequence ID" value="EDL92366.1"/>
    <property type="molecule type" value="Genomic_DNA"/>
</dbReference>
<dbReference type="EMBL" id="BC099761">
    <property type="protein sequence ID" value="AAH99761.1"/>
    <property type="molecule type" value="mRNA"/>
</dbReference>
<dbReference type="RefSeq" id="NP_001025199.1">
    <property type="nucleotide sequence ID" value="NM_001030028.1"/>
</dbReference>
<dbReference type="SMR" id="Q499U2"/>
<dbReference type="FunCoup" id="Q499U2">
    <property type="interactions" value="314"/>
</dbReference>
<dbReference type="STRING" id="10116.ENSRNOP00000021362"/>
<dbReference type="PhosphoSitePlus" id="Q499U2"/>
<dbReference type="jPOST" id="Q499U2"/>
<dbReference type="PaxDb" id="10116-ENSRNOP00000021362"/>
<dbReference type="Ensembl" id="ENSRNOT00000021362.7">
    <property type="protein sequence ID" value="ENSRNOP00000021362.6"/>
    <property type="gene ID" value="ENSRNOG00000015800.7"/>
</dbReference>
<dbReference type="GeneID" id="291962"/>
<dbReference type="KEGG" id="rno:291962"/>
<dbReference type="UCSC" id="RGD:1304734">
    <property type="organism name" value="rat"/>
</dbReference>
<dbReference type="AGR" id="RGD:1304734"/>
<dbReference type="CTD" id="79767"/>
<dbReference type="RGD" id="1304734">
    <property type="gene designation" value="Elmo3"/>
</dbReference>
<dbReference type="eggNOG" id="KOG2999">
    <property type="taxonomic scope" value="Eukaryota"/>
</dbReference>
<dbReference type="GeneTree" id="ENSGT00940000159455"/>
<dbReference type="HOGENOM" id="CLU_023887_0_0_1"/>
<dbReference type="InParanoid" id="Q499U2"/>
<dbReference type="OMA" id="KIAIQMM"/>
<dbReference type="OrthoDB" id="28413at2759"/>
<dbReference type="PhylomeDB" id="Q499U2"/>
<dbReference type="PRO" id="PR:Q499U2"/>
<dbReference type="Proteomes" id="UP000002494">
    <property type="component" value="Chromosome 19"/>
</dbReference>
<dbReference type="Proteomes" id="UP000234681">
    <property type="component" value="Chromosome 19"/>
</dbReference>
<dbReference type="Bgee" id="ENSRNOG00000015800">
    <property type="expression patterns" value="Expressed in jejunum and 19 other cell types or tissues"/>
</dbReference>
<dbReference type="GO" id="GO:0005737">
    <property type="term" value="C:cytoplasm"/>
    <property type="evidence" value="ECO:0007669"/>
    <property type="project" value="UniProtKB-SubCell"/>
</dbReference>
<dbReference type="GO" id="GO:0017124">
    <property type="term" value="F:SH3 domain binding"/>
    <property type="evidence" value="ECO:0007669"/>
    <property type="project" value="UniProtKB-KW"/>
</dbReference>
<dbReference type="GO" id="GO:0007015">
    <property type="term" value="P:actin filament organization"/>
    <property type="evidence" value="ECO:0000318"/>
    <property type="project" value="GO_Central"/>
</dbReference>
<dbReference type="GO" id="GO:0006915">
    <property type="term" value="P:apoptotic process"/>
    <property type="evidence" value="ECO:0007669"/>
    <property type="project" value="UniProtKB-KW"/>
</dbReference>
<dbReference type="GO" id="GO:0048870">
    <property type="term" value="P:cell motility"/>
    <property type="evidence" value="ECO:0000318"/>
    <property type="project" value="GO_Central"/>
</dbReference>
<dbReference type="GO" id="GO:0006909">
    <property type="term" value="P:phagocytosis"/>
    <property type="evidence" value="ECO:0007669"/>
    <property type="project" value="UniProtKB-KW"/>
</dbReference>
<dbReference type="Gene3D" id="6.10.250.810">
    <property type="match status" value="1"/>
</dbReference>
<dbReference type="Gene3D" id="1.25.10.10">
    <property type="entry name" value="Leucine-rich Repeat Variant"/>
    <property type="match status" value="1"/>
</dbReference>
<dbReference type="Gene3D" id="2.30.29.30">
    <property type="entry name" value="Pleckstrin-homology domain (PH domain)/Phosphotyrosine-binding domain (PTB)"/>
    <property type="match status" value="1"/>
</dbReference>
<dbReference type="InterPro" id="IPR011989">
    <property type="entry name" value="ARM-like"/>
</dbReference>
<dbReference type="InterPro" id="IPR016024">
    <property type="entry name" value="ARM-type_fold"/>
</dbReference>
<dbReference type="InterPro" id="IPR024574">
    <property type="entry name" value="ELMO_ARM"/>
</dbReference>
<dbReference type="InterPro" id="IPR006816">
    <property type="entry name" value="ELMO_dom"/>
</dbReference>
<dbReference type="InterPro" id="IPR050868">
    <property type="entry name" value="ELMO_domain-containing"/>
</dbReference>
<dbReference type="InterPro" id="IPR011993">
    <property type="entry name" value="PH-like_dom_sf"/>
</dbReference>
<dbReference type="InterPro" id="IPR001849">
    <property type="entry name" value="PH_domain"/>
</dbReference>
<dbReference type="PANTHER" id="PTHR12771">
    <property type="entry name" value="ENGULFMENT AND CELL MOTILITY"/>
    <property type="match status" value="1"/>
</dbReference>
<dbReference type="PANTHER" id="PTHR12771:SF16">
    <property type="entry name" value="ENGULFMENT AND CELL MOTILITY PROTEIN 3"/>
    <property type="match status" value="1"/>
</dbReference>
<dbReference type="Pfam" id="PF11841">
    <property type="entry name" value="ELMO_ARM"/>
    <property type="match status" value="1"/>
</dbReference>
<dbReference type="Pfam" id="PF04727">
    <property type="entry name" value="ELMO_CED12"/>
    <property type="match status" value="1"/>
</dbReference>
<dbReference type="Pfam" id="PF16457">
    <property type="entry name" value="PH_12"/>
    <property type="match status" value="1"/>
</dbReference>
<dbReference type="SUPFAM" id="SSF48371">
    <property type="entry name" value="ARM repeat"/>
    <property type="match status" value="1"/>
</dbReference>
<dbReference type="SUPFAM" id="SSF50729">
    <property type="entry name" value="PH domain-like"/>
    <property type="match status" value="1"/>
</dbReference>
<dbReference type="PROSITE" id="PS51335">
    <property type="entry name" value="ELMO"/>
    <property type="match status" value="1"/>
</dbReference>
<organism>
    <name type="scientific">Rattus norvegicus</name>
    <name type="common">Rat</name>
    <dbReference type="NCBI Taxonomy" id="10116"/>
    <lineage>
        <taxon>Eukaryota</taxon>
        <taxon>Metazoa</taxon>
        <taxon>Chordata</taxon>
        <taxon>Craniata</taxon>
        <taxon>Vertebrata</taxon>
        <taxon>Euteleostomi</taxon>
        <taxon>Mammalia</taxon>
        <taxon>Eutheria</taxon>
        <taxon>Euarchontoglires</taxon>
        <taxon>Glires</taxon>
        <taxon>Rodentia</taxon>
        <taxon>Myomorpha</taxon>
        <taxon>Muroidea</taxon>
        <taxon>Muridae</taxon>
        <taxon>Murinae</taxon>
        <taxon>Rattus</taxon>
    </lineage>
</organism>
<gene>
    <name type="primary">Elmo3</name>
</gene>
<sequence length="720" mass="81659">MAPPRNVVKIAVQMSDAIPQLIQLDQAKPLATVLKEVCDTWSLTHPEHYALQFADGHRKYITENNRSEIKNGSILCLSTAPDLKAQQLLSRLQNASREGCCEVLRNLVPLASDMTFAQEVISRDGLQKLSTIIENGDDLGEMLALGLRAFLELMEHGVVSWETLSISFVRKVVSYVNMNLMDASVQPLALRLLESVTLSSPTLGQLVKSEVPLDRLLVHLQVMNQQLQTKAMALLTALLQGASPAERKDMLDCLWKKNLRQFIYKNIIHSAAPMGDEMAHHLYVLQALTLGLLEPRMRTPLDPYSQEQREQLQALRQAAFEPDGESLGTGLSADRRRSLCVREFRKLGFSNSSPAQDLERVPPGLLALDNMLYFSRHAPSAYSRFVLENSSREDKHECPFARSSIQLTVLLCELLHVGEPCSETAQDFSPMFFSQDHSFHELFCVAIQLLNKTWKEMRATQEDFDKVMQVVREQLARTLALKPTSLELFRTKVNALTYGEVLRLRQTERLHQEGTLAPPILELREKLKPELMGLIRQQRLLRLCEGMLFRKISSRRRQDKLWFCCLSPNHKVLQYGDVEEGANPPTLESLTEQLPVADIRALLMGKDCPHVREKGSGKQNKDLYELAFSISYDHGEEEAYLNFIAPSKRDFYLWTDGLSALLGSTMGSEQTRLDLEQLLTMETKLRLLELENVPIPEHPPPVPPPPTNFNFCYDYSMTEP</sequence>
<keyword id="KW-0053">Apoptosis</keyword>
<keyword id="KW-0963">Cytoplasm</keyword>
<keyword id="KW-0581">Phagocytosis</keyword>
<keyword id="KW-1185">Reference proteome</keyword>
<keyword id="KW-0729">SH3-binding</keyword>
<evidence type="ECO:0000250" key="1"/>
<evidence type="ECO:0000250" key="2">
    <source>
        <dbReference type="UniProtKB" id="Q96BJ8"/>
    </source>
</evidence>
<evidence type="ECO:0000255" key="3">
    <source>
        <dbReference type="PROSITE-ProRule" id="PRU00664"/>
    </source>
</evidence>
<reference key="1">
    <citation type="submission" date="2005-07" db="EMBL/GenBank/DDBJ databases">
        <authorList>
            <person name="Mural R.J."/>
            <person name="Adams M.D."/>
            <person name="Myers E.W."/>
            <person name="Smith H.O."/>
            <person name="Venter J.C."/>
        </authorList>
    </citation>
    <scope>NUCLEOTIDE SEQUENCE [LARGE SCALE GENOMIC DNA]</scope>
</reference>
<reference key="2">
    <citation type="journal article" date="2004" name="Genome Res.">
        <title>The status, quality, and expansion of the NIH full-length cDNA project: the Mammalian Gene Collection (MGC).</title>
        <authorList>
            <consortium name="The MGC Project Team"/>
        </authorList>
    </citation>
    <scope>NUCLEOTIDE SEQUENCE [LARGE SCALE MRNA]</scope>
    <source>
        <tissue>Prostate</tissue>
    </source>
</reference>